<evidence type="ECO:0000255" key="1">
    <source>
        <dbReference type="HAMAP-Rule" id="MF_01530"/>
    </source>
</evidence>
<gene>
    <name evidence="1" type="primary">mdtL</name>
    <name type="ordered locus">SSPA3443</name>
</gene>
<comment type="subcellular location">
    <subcellularLocation>
        <location evidence="1">Cell inner membrane</location>
        <topology evidence="1">Multi-pass membrane protein</topology>
    </subcellularLocation>
</comment>
<comment type="similarity">
    <text evidence="1">Belongs to the major facilitator superfamily. DHA1 family. MdtL (TC 2.A.1.2.22) subfamily.</text>
</comment>
<protein>
    <recommendedName>
        <fullName evidence="1">Multidrug resistance protein MdtL</fullName>
    </recommendedName>
</protein>
<proteinExistence type="inferred from homology"/>
<reference key="1">
    <citation type="journal article" date="2009" name="BMC Genomics">
        <title>Pseudogene accumulation in the evolutionary histories of Salmonella enterica serovars Paratyphi A and Typhi.</title>
        <authorList>
            <person name="Holt K.E."/>
            <person name="Thomson N.R."/>
            <person name="Wain J."/>
            <person name="Langridge G.C."/>
            <person name="Hasan R."/>
            <person name="Bhutta Z.A."/>
            <person name="Quail M.A."/>
            <person name="Norbertczak H."/>
            <person name="Walker D."/>
            <person name="Simmonds M."/>
            <person name="White B."/>
            <person name="Bason N."/>
            <person name="Mungall K."/>
            <person name="Dougan G."/>
            <person name="Parkhill J."/>
        </authorList>
    </citation>
    <scope>NUCLEOTIDE SEQUENCE [LARGE SCALE GENOMIC DNA]</scope>
    <source>
        <strain>AKU_12601</strain>
    </source>
</reference>
<organism>
    <name type="scientific">Salmonella paratyphi A (strain AKU_12601)</name>
    <dbReference type="NCBI Taxonomy" id="554290"/>
    <lineage>
        <taxon>Bacteria</taxon>
        <taxon>Pseudomonadati</taxon>
        <taxon>Pseudomonadota</taxon>
        <taxon>Gammaproteobacteria</taxon>
        <taxon>Enterobacterales</taxon>
        <taxon>Enterobacteriaceae</taxon>
        <taxon>Salmonella</taxon>
    </lineage>
</organism>
<dbReference type="EMBL" id="FM200053">
    <property type="protein sequence ID" value="CAR61718.1"/>
    <property type="molecule type" value="Genomic_DNA"/>
</dbReference>
<dbReference type="RefSeq" id="WP_000819607.1">
    <property type="nucleotide sequence ID" value="NC_011147.1"/>
</dbReference>
<dbReference type="SMR" id="B5BIM0"/>
<dbReference type="KEGG" id="sek:SSPA3443"/>
<dbReference type="HOGENOM" id="CLU_001265_47_1_6"/>
<dbReference type="Proteomes" id="UP000001869">
    <property type="component" value="Chromosome"/>
</dbReference>
<dbReference type="GO" id="GO:0005886">
    <property type="term" value="C:plasma membrane"/>
    <property type="evidence" value="ECO:0007669"/>
    <property type="project" value="UniProtKB-SubCell"/>
</dbReference>
<dbReference type="GO" id="GO:0022857">
    <property type="term" value="F:transmembrane transporter activity"/>
    <property type="evidence" value="ECO:0007669"/>
    <property type="project" value="UniProtKB-UniRule"/>
</dbReference>
<dbReference type="CDD" id="cd17320">
    <property type="entry name" value="MFS_MdfA_MDR_like"/>
    <property type="match status" value="1"/>
</dbReference>
<dbReference type="FunFam" id="1.20.1720.10:FF:000003">
    <property type="entry name" value="Multidrug resistance protein MdtL"/>
    <property type="match status" value="1"/>
</dbReference>
<dbReference type="Gene3D" id="1.20.1720.10">
    <property type="entry name" value="Multidrug resistance protein D"/>
    <property type="match status" value="1"/>
</dbReference>
<dbReference type="HAMAP" id="MF_01530">
    <property type="entry name" value="MFS_MdtL"/>
    <property type="match status" value="1"/>
</dbReference>
<dbReference type="InterPro" id="IPR011701">
    <property type="entry name" value="MFS"/>
</dbReference>
<dbReference type="InterPro" id="IPR020846">
    <property type="entry name" value="MFS_dom"/>
</dbReference>
<dbReference type="InterPro" id="IPR036259">
    <property type="entry name" value="MFS_trans_sf"/>
</dbReference>
<dbReference type="InterPro" id="IPR023697">
    <property type="entry name" value="Multidrug-R_MdtL"/>
</dbReference>
<dbReference type="NCBIfam" id="NF007782">
    <property type="entry name" value="PRK10473.1"/>
    <property type="match status" value="1"/>
</dbReference>
<dbReference type="PANTHER" id="PTHR42718">
    <property type="entry name" value="MAJOR FACILITATOR SUPERFAMILY MULTIDRUG TRANSPORTER MFSC"/>
    <property type="match status" value="1"/>
</dbReference>
<dbReference type="PANTHER" id="PTHR42718:SF9">
    <property type="entry name" value="MAJOR FACILITATOR SUPERFAMILY MULTIDRUG TRANSPORTER MFSC"/>
    <property type="match status" value="1"/>
</dbReference>
<dbReference type="Pfam" id="PF07690">
    <property type="entry name" value="MFS_1"/>
    <property type="match status" value="1"/>
</dbReference>
<dbReference type="SUPFAM" id="SSF103473">
    <property type="entry name" value="MFS general substrate transporter"/>
    <property type="match status" value="1"/>
</dbReference>
<dbReference type="PROSITE" id="PS50850">
    <property type="entry name" value="MFS"/>
    <property type="match status" value="1"/>
</dbReference>
<accession>B5BIM0</accession>
<sequence>MKRFLLCSFALVLLYPAGIDMYLVGLPRIAADLNASEAQLHIAFSVYLAGMATAMLFAGKIADQSGRKPVAIVGAIVFMMASLLCSRASEGSLFLSGRFLQGVGAGGCYVVAFAILRDTLDEHRRAKVLSLLNGITCIVPVLAPVMGHLIMLRFPWQSLFYTMSTMGIIVGLLSLFILRETRPARLAPRDLSRSSPAAESLVNRFFVSRLAITTLSVSVILTFVNASPVLLMEVMGFSRGDYAITMALTAGVSMVVSFSTPFALGLFKPRTLMLVSQGLFLTAGVTLSLAHTNTVTLFGLMLICAGFSVGFGVAMSQALGPFSLRAGVASSTLGIAQVCGSSLWIWLAAILGISAMNMLIGILIGCSIVSILLIFSVAPNRSVAEHEEIPYQSRS</sequence>
<name>MDTL_SALPK</name>
<feature type="chain" id="PRO_1000200831" description="Multidrug resistance protein MdtL">
    <location>
        <begin position="1"/>
        <end position="395"/>
    </location>
</feature>
<feature type="transmembrane region" description="Helical" evidence="1">
    <location>
        <begin position="4"/>
        <end position="24"/>
    </location>
</feature>
<feature type="transmembrane region" description="Helical" evidence="1">
    <location>
        <begin position="42"/>
        <end position="62"/>
    </location>
</feature>
<feature type="transmembrane region" description="Helical" evidence="1">
    <location>
        <begin position="69"/>
        <end position="89"/>
    </location>
</feature>
<feature type="transmembrane region" description="Helical" evidence="1">
    <location>
        <begin position="93"/>
        <end position="113"/>
    </location>
</feature>
<feature type="transmembrane region" description="Helical" evidence="1">
    <location>
        <begin position="131"/>
        <end position="151"/>
    </location>
</feature>
<feature type="transmembrane region" description="Helical" evidence="1">
    <location>
        <begin position="158"/>
        <end position="178"/>
    </location>
</feature>
<feature type="transmembrane region" description="Helical" evidence="1">
    <location>
        <begin position="217"/>
        <end position="237"/>
    </location>
</feature>
<feature type="transmembrane region" description="Helical" evidence="1">
    <location>
        <begin position="247"/>
        <end position="267"/>
    </location>
</feature>
<feature type="transmembrane region" description="Helical" evidence="1">
    <location>
        <begin position="271"/>
        <end position="291"/>
    </location>
</feature>
<feature type="transmembrane region" description="Helical" evidence="1">
    <location>
        <begin position="295"/>
        <end position="315"/>
    </location>
</feature>
<feature type="transmembrane region" description="Helical" evidence="1">
    <location>
        <begin position="333"/>
        <end position="353"/>
    </location>
</feature>
<feature type="transmembrane region" description="Helical" evidence="1">
    <location>
        <begin position="358"/>
        <end position="378"/>
    </location>
</feature>
<keyword id="KW-0997">Cell inner membrane</keyword>
<keyword id="KW-1003">Cell membrane</keyword>
<keyword id="KW-0472">Membrane</keyword>
<keyword id="KW-0812">Transmembrane</keyword>
<keyword id="KW-1133">Transmembrane helix</keyword>
<keyword id="KW-0813">Transport</keyword>